<protein>
    <recommendedName>
        <fullName>Kunitz-type U15-theraphotoxin-Hs1f</fullName>
        <shortName>U15-TRTX-Hs1f</shortName>
    </recommendedName>
    <alternativeName>
        <fullName evidence="6">Huwentoxin HW11c45</fullName>
    </alternativeName>
    <alternativeName>
        <fullName evidence="5">Kunitz-type serine protease inhibitor HWTX-XI-IS45</fullName>
    </alternativeName>
</protein>
<comment type="function">
    <text evidence="2">Serine protease inhibitor that inhibits trypsin at a molar ratio of 1:1.</text>
</comment>
<comment type="subcellular location">
    <subcellularLocation>
        <location evidence="8">Secreted</location>
    </subcellularLocation>
</comment>
<comment type="tissue specificity">
    <text evidence="8">Expressed by the venom gland.</text>
</comment>
<comment type="similarity">
    <text evidence="7">Belongs to the venom Kunitz-type family. 03 (sub-Kunitz) subfamily.</text>
</comment>
<accession>P0DJ85</accession>
<accession>A0A023WAJ3</accession>
<dbReference type="EMBL" id="KF160309">
    <property type="protein sequence ID" value="AHY30320.1"/>
    <property type="molecule type" value="Genomic_DNA"/>
</dbReference>
<dbReference type="SMR" id="P0DJ85"/>
<dbReference type="ArachnoServer" id="AS001921">
    <property type="toxin name" value="U15-theraphotoxin-Hs1f"/>
</dbReference>
<dbReference type="GO" id="GO:0005576">
    <property type="term" value="C:extracellular region"/>
    <property type="evidence" value="ECO:0007669"/>
    <property type="project" value="UniProtKB-SubCell"/>
</dbReference>
<dbReference type="GO" id="GO:0015459">
    <property type="term" value="F:potassium channel regulator activity"/>
    <property type="evidence" value="ECO:0007669"/>
    <property type="project" value="UniProtKB-KW"/>
</dbReference>
<dbReference type="GO" id="GO:0004867">
    <property type="term" value="F:serine-type endopeptidase inhibitor activity"/>
    <property type="evidence" value="ECO:0007669"/>
    <property type="project" value="UniProtKB-KW"/>
</dbReference>
<dbReference type="GO" id="GO:0090729">
    <property type="term" value="F:toxin activity"/>
    <property type="evidence" value="ECO:0007669"/>
    <property type="project" value="UniProtKB-KW"/>
</dbReference>
<dbReference type="GO" id="GO:0044562">
    <property type="term" value="P:envenomation resulting in negative regulation of voltage-gated potassium channel activity in another organism"/>
    <property type="evidence" value="ECO:0007669"/>
    <property type="project" value="UniProtKB-ARBA"/>
</dbReference>
<dbReference type="CDD" id="cd22598">
    <property type="entry name" value="Kunitz_huwentoxin"/>
    <property type="match status" value="1"/>
</dbReference>
<dbReference type="FunFam" id="4.10.410.10:FF:000020">
    <property type="entry name" value="Collagen, type VI, alpha 3"/>
    <property type="match status" value="1"/>
</dbReference>
<dbReference type="Gene3D" id="4.10.410.10">
    <property type="entry name" value="Pancreatic trypsin inhibitor Kunitz domain"/>
    <property type="match status" value="1"/>
</dbReference>
<dbReference type="InterPro" id="IPR002223">
    <property type="entry name" value="Kunitz_BPTI"/>
</dbReference>
<dbReference type="InterPro" id="IPR036880">
    <property type="entry name" value="Kunitz_BPTI_sf"/>
</dbReference>
<dbReference type="InterPro" id="IPR051388">
    <property type="entry name" value="Serpin_venom_toxin"/>
</dbReference>
<dbReference type="PANTHER" id="PTHR46751">
    <property type="entry name" value="EPPIN"/>
    <property type="match status" value="1"/>
</dbReference>
<dbReference type="PANTHER" id="PTHR46751:SF1">
    <property type="entry name" value="WAP FOUR-DISULFIDE CORE DOMAIN PROTEIN 6A"/>
    <property type="match status" value="1"/>
</dbReference>
<dbReference type="Pfam" id="PF00014">
    <property type="entry name" value="Kunitz_BPTI"/>
    <property type="match status" value="1"/>
</dbReference>
<dbReference type="PRINTS" id="PR00759">
    <property type="entry name" value="BASICPTASE"/>
</dbReference>
<dbReference type="SMART" id="SM00131">
    <property type="entry name" value="KU"/>
    <property type="match status" value="1"/>
</dbReference>
<dbReference type="SUPFAM" id="SSF57362">
    <property type="entry name" value="BPTI-like"/>
    <property type="match status" value="1"/>
</dbReference>
<dbReference type="PROSITE" id="PS50279">
    <property type="entry name" value="BPTI_KUNITZ_2"/>
    <property type="match status" value="1"/>
</dbReference>
<organism>
    <name type="scientific">Cyriopagopus schmidti</name>
    <name type="common">Chinese bird spider</name>
    <name type="synonym">Haplopelma schmidti</name>
    <dbReference type="NCBI Taxonomy" id="29017"/>
    <lineage>
        <taxon>Eukaryota</taxon>
        <taxon>Metazoa</taxon>
        <taxon>Ecdysozoa</taxon>
        <taxon>Arthropoda</taxon>
        <taxon>Chelicerata</taxon>
        <taxon>Arachnida</taxon>
        <taxon>Araneae</taxon>
        <taxon>Mygalomorphae</taxon>
        <taxon>Theraphosidae</taxon>
        <taxon>Cyriopagopus</taxon>
    </lineage>
</organism>
<reference key="1">
    <citation type="journal article" date="2008" name="PLoS ONE">
        <title>Discovery of a distinct superfamily of Kunitz-type toxin (KTT) from tarantulas.</title>
        <authorList>
            <person name="Yuan C.-H."/>
            <person name="He Q.-Y."/>
            <person name="Peng K."/>
            <person name="Diao J.-B."/>
            <person name="Jiang L.-P."/>
            <person name="Tang X."/>
            <person name="Liang S.-P."/>
        </authorList>
    </citation>
    <scope>NUCLEOTIDE SEQUENCE [MRNA]</scope>
    <source>
        <tissue>Venom gland</tissue>
    </source>
</reference>
<reference key="2">
    <citation type="journal article" date="2014" name="Peptides">
        <title>Molecular cloning, bioinformatics analysis and functional characterization of HWTX-XI toxin superfamily from the spider Ornithoctonus huwena.</title>
        <authorList>
            <person name="Jiang L."/>
            <person name="Deng M."/>
            <person name="Duan Z."/>
            <person name="Tang X."/>
            <person name="Liang S."/>
        </authorList>
    </citation>
    <scope>NUCLEOTIDE SEQUENCE [GENOMIC DNA]</scope>
    <source>
        <tissue>Venom gland</tissue>
    </source>
</reference>
<feature type="signal peptide" evidence="3">
    <location>
        <begin position="1"/>
        <end position="27"/>
    </location>
</feature>
<feature type="propeptide" id="PRO_0000413844" evidence="1">
    <location>
        <begin position="28"/>
        <end position="33"/>
    </location>
</feature>
<feature type="chain" id="PRO_0000413845" description="Kunitz-type U15-theraphotoxin-Hs1f">
    <location>
        <begin position="34"/>
        <end position="88"/>
    </location>
</feature>
<feature type="domain" description="BPTI/Kunitz inhibitor" evidence="4">
    <location>
        <begin position="37"/>
        <end position="85"/>
    </location>
</feature>
<feature type="site" description="May bind Kv1" evidence="1">
    <location>
        <position position="39"/>
    </location>
</feature>
<feature type="site" description="Reactive bond for chymotrypsin" evidence="1">
    <location>
        <begin position="47"/>
        <end position="48"/>
    </location>
</feature>
<feature type="disulfide bond" evidence="4">
    <location>
        <begin position="37"/>
        <end position="85"/>
    </location>
</feature>
<feature type="disulfide bond" evidence="4">
    <location>
        <begin position="60"/>
        <end position="81"/>
    </location>
</feature>
<name>VKT45_CYRSC</name>
<evidence type="ECO:0000250" key="1"/>
<evidence type="ECO:0000250" key="2">
    <source>
        <dbReference type="UniProtKB" id="P68425"/>
    </source>
</evidence>
<evidence type="ECO:0000255" key="3"/>
<evidence type="ECO:0000255" key="4">
    <source>
        <dbReference type="PROSITE-ProRule" id="PRU00031"/>
    </source>
</evidence>
<evidence type="ECO:0000303" key="5">
    <source>
    </source>
</evidence>
<evidence type="ECO:0000303" key="6">
    <source>
    </source>
</evidence>
<evidence type="ECO:0000305" key="7"/>
<evidence type="ECO:0000305" key="8">
    <source>
    </source>
</evidence>
<sequence>MGTARFLSAVLLLSVLLMVTFPALLSAEYHDGRVDICSLPSDSGDCLRLFEMWYFDGTTCTKFVYGGYGGNDNRFPTEKACMKRCAKV</sequence>
<proteinExistence type="inferred from homology"/>
<keyword id="KW-1015">Disulfide bond</keyword>
<keyword id="KW-0646">Protease inhibitor</keyword>
<keyword id="KW-0964">Secreted</keyword>
<keyword id="KW-0722">Serine protease inhibitor</keyword>
<keyword id="KW-0732">Signal</keyword>